<gene>
    <name type="primary">vapB46</name>
    <name type="ordered locus">MT3493</name>
</gene>
<name>VPB46_MYCTO</name>
<proteinExistence type="inferred from homology"/>
<organism>
    <name type="scientific">Mycobacterium tuberculosis (strain CDC 1551 / Oshkosh)</name>
    <dbReference type="NCBI Taxonomy" id="83331"/>
    <lineage>
        <taxon>Bacteria</taxon>
        <taxon>Bacillati</taxon>
        <taxon>Actinomycetota</taxon>
        <taxon>Actinomycetes</taxon>
        <taxon>Mycobacteriales</taxon>
        <taxon>Mycobacteriaceae</taxon>
        <taxon>Mycobacterium</taxon>
        <taxon>Mycobacterium tuberculosis complex</taxon>
    </lineage>
</organism>
<keyword id="KW-1185">Reference proteome</keyword>
<keyword id="KW-1277">Toxin-antitoxin system</keyword>
<accession>P9WF12</accession>
<accession>L0TF80</accession>
<accession>O50412</accession>
<accession>Q7D5L3</accession>
<sequence>MTPTACATVSTMTSVGVRALRQRASELLRRVEAGETIEITDRGRPVALLSPLPQGGPYEQLLASGEIERATLDVVDLPEPLDLDAGVELPSVTLARLREHER</sequence>
<evidence type="ECO:0000250" key="1"/>
<evidence type="ECO:0000305" key="2"/>
<comment type="function">
    <text evidence="1">Antitoxin component of a type II toxin-antitoxin (TA) system. Neutralizes the effect of cognate toxin VapC46 (By similarity).</text>
</comment>
<comment type="similarity">
    <text evidence="2">Belongs to the phD/YefM antitoxin family.</text>
</comment>
<feature type="chain" id="PRO_0000428619" description="Antitoxin VapB46">
    <location>
        <begin position="1"/>
        <end position="102"/>
    </location>
</feature>
<dbReference type="EMBL" id="AE000516">
    <property type="protein sequence ID" value="AAK47829.1"/>
    <property type="molecule type" value="Genomic_DNA"/>
</dbReference>
<dbReference type="PIR" id="H70973">
    <property type="entry name" value="H70973"/>
</dbReference>
<dbReference type="SMR" id="P9WF12"/>
<dbReference type="KEGG" id="mtc:MT3493"/>
<dbReference type="PATRIC" id="fig|83331.31.peg.3749"/>
<dbReference type="HOGENOM" id="CLU_163140_2_2_11"/>
<dbReference type="Proteomes" id="UP000001020">
    <property type="component" value="Chromosome"/>
</dbReference>
<dbReference type="GO" id="GO:0097351">
    <property type="term" value="F:toxin sequestering activity"/>
    <property type="evidence" value="ECO:0007669"/>
    <property type="project" value="TreeGrafter"/>
</dbReference>
<dbReference type="FunFam" id="3.40.1620.10:FF:000002">
    <property type="entry name" value="Antitoxin"/>
    <property type="match status" value="1"/>
</dbReference>
<dbReference type="Gene3D" id="3.40.1620.10">
    <property type="entry name" value="YefM-like domain"/>
    <property type="match status" value="1"/>
</dbReference>
<dbReference type="InterPro" id="IPR006442">
    <property type="entry name" value="Antitoxin_Phd/YefM"/>
</dbReference>
<dbReference type="InterPro" id="IPR051416">
    <property type="entry name" value="phD-YefM_TA_antitoxins"/>
</dbReference>
<dbReference type="InterPro" id="IPR036165">
    <property type="entry name" value="YefM-like_sf"/>
</dbReference>
<dbReference type="NCBIfam" id="TIGR01552">
    <property type="entry name" value="phd_fam"/>
    <property type="match status" value="1"/>
</dbReference>
<dbReference type="PANTHER" id="PTHR35377:SF5">
    <property type="entry name" value="ANTITOXIN VAPB46"/>
    <property type="match status" value="1"/>
</dbReference>
<dbReference type="PANTHER" id="PTHR35377">
    <property type="entry name" value="ANTITOXIN VAPB49-RELATED-RELATED"/>
    <property type="match status" value="1"/>
</dbReference>
<dbReference type="Pfam" id="PF02604">
    <property type="entry name" value="PhdYeFM_antitox"/>
    <property type="match status" value="1"/>
</dbReference>
<dbReference type="SUPFAM" id="SSF143120">
    <property type="entry name" value="YefM-like"/>
    <property type="match status" value="1"/>
</dbReference>
<reference key="1">
    <citation type="journal article" date="2002" name="J. Bacteriol.">
        <title>Whole-genome comparison of Mycobacterium tuberculosis clinical and laboratory strains.</title>
        <authorList>
            <person name="Fleischmann R.D."/>
            <person name="Alland D."/>
            <person name="Eisen J.A."/>
            <person name="Carpenter L."/>
            <person name="White O."/>
            <person name="Peterson J.D."/>
            <person name="DeBoy R.T."/>
            <person name="Dodson R.J."/>
            <person name="Gwinn M.L."/>
            <person name="Haft D.H."/>
            <person name="Hickey E.K."/>
            <person name="Kolonay J.F."/>
            <person name="Nelson W.C."/>
            <person name="Umayam L.A."/>
            <person name="Ermolaeva M.D."/>
            <person name="Salzberg S.L."/>
            <person name="Delcher A."/>
            <person name="Utterback T.R."/>
            <person name="Weidman J.F."/>
            <person name="Khouri H.M."/>
            <person name="Gill J."/>
            <person name="Mikula A."/>
            <person name="Bishai W."/>
            <person name="Jacobs W.R. Jr."/>
            <person name="Venter J.C."/>
            <person name="Fraser C.M."/>
        </authorList>
    </citation>
    <scope>NUCLEOTIDE SEQUENCE [LARGE SCALE GENOMIC DNA]</scope>
    <source>
        <strain>CDC 1551 / Oshkosh</strain>
    </source>
</reference>
<protein>
    <recommendedName>
        <fullName>Antitoxin VapB46</fullName>
    </recommendedName>
</protein>